<gene>
    <name evidence="1" type="primary">rpmI</name>
    <name type="ordered locus">Deide_05910</name>
</gene>
<protein>
    <recommendedName>
        <fullName evidence="1">Large ribosomal subunit protein bL35</fullName>
    </recommendedName>
    <alternativeName>
        <fullName evidence="2">50S ribosomal protein L35</fullName>
    </alternativeName>
</protein>
<sequence>MPKMKTLKSASRRIKITGTGKVMAFKSGKRHQNTGKSGDEIRGKGKGFVLAKSEWARMKLMLPKGK</sequence>
<organism>
    <name type="scientific">Deinococcus deserti (strain DSM 17065 / CIP 109153 / LMG 22923 / VCD115)</name>
    <dbReference type="NCBI Taxonomy" id="546414"/>
    <lineage>
        <taxon>Bacteria</taxon>
        <taxon>Thermotogati</taxon>
        <taxon>Deinococcota</taxon>
        <taxon>Deinococci</taxon>
        <taxon>Deinococcales</taxon>
        <taxon>Deinococcaceae</taxon>
        <taxon>Deinococcus</taxon>
    </lineage>
</organism>
<reference key="1">
    <citation type="journal article" date="2009" name="PLoS Genet.">
        <title>Alliance of proteomics and genomics to unravel the specificities of Sahara bacterium Deinococcus deserti.</title>
        <authorList>
            <person name="de Groot A."/>
            <person name="Dulermo R."/>
            <person name="Ortet P."/>
            <person name="Blanchard L."/>
            <person name="Guerin P."/>
            <person name="Fernandez B."/>
            <person name="Vacherie B."/>
            <person name="Dossat C."/>
            <person name="Jolivet E."/>
            <person name="Siguier P."/>
            <person name="Chandler M."/>
            <person name="Barakat M."/>
            <person name="Dedieu A."/>
            <person name="Barbe V."/>
            <person name="Heulin T."/>
            <person name="Sommer S."/>
            <person name="Achouak W."/>
            <person name="Armengaud J."/>
        </authorList>
    </citation>
    <scope>NUCLEOTIDE SEQUENCE [LARGE SCALE GENOMIC DNA]</scope>
    <source>
        <strain>DSM 17065 / CIP 109153 / LMG 22923 / VCD115</strain>
    </source>
</reference>
<keyword id="KW-1185">Reference proteome</keyword>
<keyword id="KW-0687">Ribonucleoprotein</keyword>
<keyword id="KW-0689">Ribosomal protein</keyword>
<proteinExistence type="inferred from homology"/>
<name>RL35_DEIDV</name>
<comment type="similarity">
    <text evidence="1">Belongs to the bacterial ribosomal protein bL35 family.</text>
</comment>
<dbReference type="EMBL" id="CP001114">
    <property type="protein sequence ID" value="ACO45431.1"/>
    <property type="molecule type" value="Genomic_DNA"/>
</dbReference>
<dbReference type="RefSeq" id="WP_012692554.1">
    <property type="nucleotide sequence ID" value="NC_012526.1"/>
</dbReference>
<dbReference type="SMR" id="C1D0Q7"/>
<dbReference type="STRING" id="546414.Deide_05910"/>
<dbReference type="PaxDb" id="546414-Deide_05910"/>
<dbReference type="KEGG" id="ddr:Deide_05910"/>
<dbReference type="eggNOG" id="COG0291">
    <property type="taxonomic scope" value="Bacteria"/>
</dbReference>
<dbReference type="HOGENOM" id="CLU_169643_2_2_0"/>
<dbReference type="OrthoDB" id="47476at2"/>
<dbReference type="Proteomes" id="UP000002208">
    <property type="component" value="Chromosome"/>
</dbReference>
<dbReference type="GO" id="GO:0022625">
    <property type="term" value="C:cytosolic large ribosomal subunit"/>
    <property type="evidence" value="ECO:0007669"/>
    <property type="project" value="TreeGrafter"/>
</dbReference>
<dbReference type="GO" id="GO:0003735">
    <property type="term" value="F:structural constituent of ribosome"/>
    <property type="evidence" value="ECO:0007669"/>
    <property type="project" value="InterPro"/>
</dbReference>
<dbReference type="GO" id="GO:0006412">
    <property type="term" value="P:translation"/>
    <property type="evidence" value="ECO:0007669"/>
    <property type="project" value="UniProtKB-UniRule"/>
</dbReference>
<dbReference type="FunFam" id="4.10.410.60:FF:000001">
    <property type="entry name" value="50S ribosomal protein L35"/>
    <property type="match status" value="1"/>
</dbReference>
<dbReference type="Gene3D" id="4.10.410.60">
    <property type="match status" value="1"/>
</dbReference>
<dbReference type="HAMAP" id="MF_00514">
    <property type="entry name" value="Ribosomal_bL35"/>
    <property type="match status" value="1"/>
</dbReference>
<dbReference type="InterPro" id="IPR001706">
    <property type="entry name" value="Ribosomal_bL35"/>
</dbReference>
<dbReference type="InterPro" id="IPR021137">
    <property type="entry name" value="Ribosomal_bL35-like"/>
</dbReference>
<dbReference type="InterPro" id="IPR018265">
    <property type="entry name" value="Ribosomal_bL35_CS"/>
</dbReference>
<dbReference type="InterPro" id="IPR037229">
    <property type="entry name" value="Ribosomal_bL35_sf"/>
</dbReference>
<dbReference type="NCBIfam" id="TIGR00001">
    <property type="entry name" value="rpmI_bact"/>
    <property type="match status" value="1"/>
</dbReference>
<dbReference type="PANTHER" id="PTHR33343">
    <property type="entry name" value="54S RIBOSOMAL PROTEIN BL35M"/>
    <property type="match status" value="1"/>
</dbReference>
<dbReference type="PANTHER" id="PTHR33343:SF1">
    <property type="entry name" value="LARGE RIBOSOMAL SUBUNIT PROTEIN BL35M"/>
    <property type="match status" value="1"/>
</dbReference>
<dbReference type="Pfam" id="PF01632">
    <property type="entry name" value="Ribosomal_L35p"/>
    <property type="match status" value="1"/>
</dbReference>
<dbReference type="PRINTS" id="PR00064">
    <property type="entry name" value="RIBOSOMALL35"/>
</dbReference>
<dbReference type="SUPFAM" id="SSF143034">
    <property type="entry name" value="L35p-like"/>
    <property type="match status" value="1"/>
</dbReference>
<dbReference type="PROSITE" id="PS00936">
    <property type="entry name" value="RIBOSOMAL_L35"/>
    <property type="match status" value="1"/>
</dbReference>
<accession>C1D0Q7</accession>
<feature type="chain" id="PRO_1000211696" description="Large ribosomal subunit protein bL35">
    <location>
        <begin position="1"/>
        <end position="66"/>
    </location>
</feature>
<evidence type="ECO:0000255" key="1">
    <source>
        <dbReference type="HAMAP-Rule" id="MF_00514"/>
    </source>
</evidence>
<evidence type="ECO:0000305" key="2"/>